<sequence>MNKHERLDEIAKLVNKKGTIRTNEIVEGLNVSDMTVRRDLIELENKGILTKIHGGARSNSTFQYKEISHKEKHTRQIAEKRFIAKKAASLIEDGDTLFFGPGTTVELLAEEVNHHTLTIITNCLPVYKILLEKQTAHFRVYLIGGEMRHITEAFVGEMANAMLEKLRFSKMFFSSNAVNKGAVMTSTLDEAYTQQLALSNSIEKYLLIDHTKVGKEDFTSFCQLNELTAVVMDYEDEEKVETIKTYIEVVD</sequence>
<feature type="chain" id="PRO_0000050261" description="Lactose phosphotransferase system repressor">
    <location>
        <begin position="1"/>
        <end position="251"/>
    </location>
</feature>
<feature type="domain" description="HTH deoR-type" evidence="2">
    <location>
        <begin position="3"/>
        <end position="58"/>
    </location>
</feature>
<feature type="DNA-binding region" description="H-T-H motif" evidence="2">
    <location>
        <begin position="20"/>
        <end position="39"/>
    </location>
</feature>
<name>LACR_STAAS</name>
<protein>
    <recommendedName>
        <fullName>Lactose phosphotransferase system repressor</fullName>
    </recommendedName>
</protein>
<organism>
    <name type="scientific">Staphylococcus aureus (strain MSSA476)</name>
    <dbReference type="NCBI Taxonomy" id="282459"/>
    <lineage>
        <taxon>Bacteria</taxon>
        <taxon>Bacillati</taxon>
        <taxon>Bacillota</taxon>
        <taxon>Bacilli</taxon>
        <taxon>Bacillales</taxon>
        <taxon>Staphylococcaceae</taxon>
        <taxon>Staphylococcus</taxon>
    </lineage>
</organism>
<proteinExistence type="inferred from homology"/>
<dbReference type="EMBL" id="BX571857">
    <property type="protein sequence ID" value="CAG43905.1"/>
    <property type="molecule type" value="Genomic_DNA"/>
</dbReference>
<dbReference type="RefSeq" id="WP_001032739.1">
    <property type="nucleotide sequence ID" value="NC_002953.3"/>
</dbReference>
<dbReference type="SMR" id="Q6G7B8"/>
<dbReference type="KEGG" id="sas:SAS2097"/>
<dbReference type="HOGENOM" id="CLU_060699_1_0_9"/>
<dbReference type="GO" id="GO:0003677">
    <property type="term" value="F:DNA binding"/>
    <property type="evidence" value="ECO:0007669"/>
    <property type="project" value="UniProtKB-KW"/>
</dbReference>
<dbReference type="GO" id="GO:0003700">
    <property type="term" value="F:DNA-binding transcription factor activity"/>
    <property type="evidence" value="ECO:0007669"/>
    <property type="project" value="InterPro"/>
</dbReference>
<dbReference type="GO" id="GO:0005988">
    <property type="term" value="P:lactose metabolic process"/>
    <property type="evidence" value="ECO:0007669"/>
    <property type="project" value="UniProtKB-KW"/>
</dbReference>
<dbReference type="Gene3D" id="3.40.50.1360">
    <property type="match status" value="1"/>
</dbReference>
<dbReference type="Gene3D" id="1.10.10.10">
    <property type="entry name" value="Winged helix-like DNA-binding domain superfamily/Winged helix DNA-binding domain"/>
    <property type="match status" value="1"/>
</dbReference>
<dbReference type="InterPro" id="IPR050313">
    <property type="entry name" value="Carb_Metab_HTH_regulators"/>
</dbReference>
<dbReference type="InterPro" id="IPR014036">
    <property type="entry name" value="DeoR-like_C"/>
</dbReference>
<dbReference type="InterPro" id="IPR001034">
    <property type="entry name" value="DeoR_HTH"/>
</dbReference>
<dbReference type="InterPro" id="IPR037171">
    <property type="entry name" value="NagB/RpiA_transferase-like"/>
</dbReference>
<dbReference type="InterPro" id="IPR018356">
    <property type="entry name" value="Tscrpt_reg_HTH_DeoR_CS"/>
</dbReference>
<dbReference type="InterPro" id="IPR036388">
    <property type="entry name" value="WH-like_DNA-bd_sf"/>
</dbReference>
<dbReference type="InterPro" id="IPR036390">
    <property type="entry name" value="WH_DNA-bd_sf"/>
</dbReference>
<dbReference type="PANTHER" id="PTHR30363:SF4">
    <property type="entry name" value="GLYCEROL-3-PHOSPHATE REGULON REPRESSOR"/>
    <property type="match status" value="1"/>
</dbReference>
<dbReference type="PANTHER" id="PTHR30363">
    <property type="entry name" value="HTH-TYPE TRANSCRIPTIONAL REGULATOR SRLR-RELATED"/>
    <property type="match status" value="1"/>
</dbReference>
<dbReference type="Pfam" id="PF00455">
    <property type="entry name" value="DeoRC"/>
    <property type="match status" value="1"/>
</dbReference>
<dbReference type="Pfam" id="PF08220">
    <property type="entry name" value="HTH_DeoR"/>
    <property type="match status" value="1"/>
</dbReference>
<dbReference type="PRINTS" id="PR00037">
    <property type="entry name" value="HTHLACR"/>
</dbReference>
<dbReference type="SMART" id="SM01134">
    <property type="entry name" value="DeoRC"/>
    <property type="match status" value="1"/>
</dbReference>
<dbReference type="SMART" id="SM00420">
    <property type="entry name" value="HTH_DEOR"/>
    <property type="match status" value="1"/>
</dbReference>
<dbReference type="SUPFAM" id="SSF100950">
    <property type="entry name" value="NagB/RpiA/CoA transferase-like"/>
    <property type="match status" value="1"/>
</dbReference>
<dbReference type="SUPFAM" id="SSF46785">
    <property type="entry name" value="Winged helix' DNA-binding domain"/>
    <property type="match status" value="1"/>
</dbReference>
<dbReference type="PROSITE" id="PS00894">
    <property type="entry name" value="HTH_DEOR_1"/>
    <property type="match status" value="1"/>
</dbReference>
<dbReference type="PROSITE" id="PS51000">
    <property type="entry name" value="HTH_DEOR_2"/>
    <property type="match status" value="1"/>
</dbReference>
<evidence type="ECO:0000250" key="1"/>
<evidence type="ECO:0000255" key="2">
    <source>
        <dbReference type="PROSITE-ProRule" id="PRU00349"/>
    </source>
</evidence>
<comment type="function">
    <text evidence="1">Repressor of the lactose catabolism operon. Galactose-6-phosphate is the inducer (By similarity).</text>
</comment>
<keyword id="KW-0238">DNA-binding</keyword>
<keyword id="KW-0423">Lactose metabolism</keyword>
<keyword id="KW-0678">Repressor</keyword>
<keyword id="KW-0804">Transcription</keyword>
<keyword id="KW-0805">Transcription regulation</keyword>
<reference key="1">
    <citation type="journal article" date="2004" name="Proc. Natl. Acad. Sci. U.S.A.">
        <title>Complete genomes of two clinical Staphylococcus aureus strains: evidence for the rapid evolution of virulence and drug resistance.</title>
        <authorList>
            <person name="Holden M.T.G."/>
            <person name="Feil E.J."/>
            <person name="Lindsay J.A."/>
            <person name="Peacock S.J."/>
            <person name="Day N.P.J."/>
            <person name="Enright M.C."/>
            <person name="Foster T.J."/>
            <person name="Moore C.E."/>
            <person name="Hurst L."/>
            <person name="Atkin R."/>
            <person name="Barron A."/>
            <person name="Bason N."/>
            <person name="Bentley S.D."/>
            <person name="Chillingworth C."/>
            <person name="Chillingworth T."/>
            <person name="Churcher C."/>
            <person name="Clark L."/>
            <person name="Corton C."/>
            <person name="Cronin A."/>
            <person name="Doggett J."/>
            <person name="Dowd L."/>
            <person name="Feltwell T."/>
            <person name="Hance Z."/>
            <person name="Harris B."/>
            <person name="Hauser H."/>
            <person name="Holroyd S."/>
            <person name="Jagels K."/>
            <person name="James K.D."/>
            <person name="Lennard N."/>
            <person name="Line A."/>
            <person name="Mayes R."/>
            <person name="Moule S."/>
            <person name="Mungall K."/>
            <person name="Ormond D."/>
            <person name="Quail M.A."/>
            <person name="Rabbinowitsch E."/>
            <person name="Rutherford K.M."/>
            <person name="Sanders M."/>
            <person name="Sharp S."/>
            <person name="Simmonds M."/>
            <person name="Stevens K."/>
            <person name="Whitehead S."/>
            <person name="Barrell B.G."/>
            <person name="Spratt B.G."/>
            <person name="Parkhill J."/>
        </authorList>
    </citation>
    <scope>NUCLEOTIDE SEQUENCE [LARGE SCALE GENOMIC DNA]</scope>
    <source>
        <strain>MSSA476</strain>
    </source>
</reference>
<gene>
    <name type="primary">lacR</name>
    <name type="ordered locus">SAS2097</name>
</gene>
<accession>Q6G7B8</accession>